<reference key="1">
    <citation type="journal article" date="1987" name="Virus Res.">
        <title>The complete nucleotide sequence of bluetongue virus serotype 1 RNA3 and a comparison with other geographic serotypes from Australia, South Africa and the United States of America, and with other orbivirus isolates.</title>
        <authorList>
            <person name="Gould A.R."/>
        </authorList>
    </citation>
    <scope>NUCLEOTIDE SEQUENCE</scope>
</reference>
<evidence type="ECO:0000305" key="1"/>
<name>VP3_BTV1A</name>
<organismHost>
    <name type="scientific">Antilocapra americana</name>
    <name type="common">Pronghorn</name>
    <dbReference type="NCBI Taxonomy" id="9891"/>
</organismHost>
<organismHost>
    <name type="scientific">Bos taurus</name>
    <name type="common">Bovine</name>
    <dbReference type="NCBI Taxonomy" id="9913"/>
</organismHost>
<organismHost>
    <name type="scientific">Capra hircus</name>
    <name type="common">Goat</name>
    <dbReference type="NCBI Taxonomy" id="9925"/>
</organismHost>
<organismHost>
    <name type="scientific">Culicoides variipennis</name>
    <name type="common">Biting midge</name>
    <dbReference type="NCBI Taxonomy" id="46212"/>
</organismHost>
<organismHost>
    <name type="scientific">Ovis aries</name>
    <name type="common">Sheep</name>
    <dbReference type="NCBI Taxonomy" id="9940"/>
</organismHost>
<feature type="chain" id="PRO_0000222692" description="Core protein VP3">
    <location>
        <begin position="1"/>
        <end position="901"/>
    </location>
</feature>
<gene>
    <name type="primary">Segment-3</name>
    <name type="synonym">L3</name>
</gene>
<organism>
    <name type="scientific">Bluetongue virus 1 (isolate Australia)</name>
    <name type="common">BTV 1</name>
    <dbReference type="NCBI Taxonomy" id="10904"/>
    <lineage>
        <taxon>Viruses</taxon>
        <taxon>Riboviria</taxon>
        <taxon>Orthornavirae</taxon>
        <taxon>Duplornaviricota</taxon>
        <taxon>Resentoviricetes</taxon>
        <taxon>Reovirales</taxon>
        <taxon>Sedoreoviridae</taxon>
        <taxon>Orbivirus</taxon>
        <taxon>Bluetongue virus</taxon>
    </lineage>
</organism>
<proteinExistence type="inferred from homology"/>
<protein>
    <recommendedName>
        <fullName>Core protein VP3</fullName>
    </recommendedName>
    <alternativeName>
        <fullName>Major inner capsid protein</fullName>
    </alternativeName>
</protein>
<dbReference type="SMR" id="P20608"/>
<dbReference type="GO" id="GO:0044423">
    <property type="term" value="C:virion component"/>
    <property type="evidence" value="ECO:0007669"/>
    <property type="project" value="UniProtKB-KW"/>
</dbReference>
<dbReference type="GO" id="GO:0005198">
    <property type="term" value="F:structural molecule activity"/>
    <property type="evidence" value="ECO:0007669"/>
    <property type="project" value="InterPro"/>
</dbReference>
<dbReference type="InterPro" id="IPR002614">
    <property type="entry name" value="Inner_layer_core_VP3_Orbivir"/>
</dbReference>
<dbReference type="InterPro" id="IPR016029">
    <property type="entry name" value="Inner_layer_core_VP3_Reovir"/>
</dbReference>
<dbReference type="Pfam" id="PF01700">
    <property type="entry name" value="Orbi_VP3"/>
    <property type="match status" value="1"/>
</dbReference>
<dbReference type="SUPFAM" id="SSF56831">
    <property type="entry name" value="Reovirus inner layer core protein p3"/>
    <property type="match status" value="1"/>
</dbReference>
<keyword id="KW-0946">Virion</keyword>
<comment type="function">
    <text>The VP3 protein is one of the five proteins (with VP1, VP4, VP6 and VP7) which form the inner capsid of the virus.</text>
</comment>
<comment type="subcellular location">
    <subcellularLocation>
        <location evidence="1">Virion</location>
    </subcellularLocation>
</comment>
<comment type="similarity">
    <text evidence="1">Belongs to the orbivirus VP3 family.</text>
</comment>
<sequence>MAAQNEQRPERIKTTPYLEGDVLSSDSGPLLSVFALQEIMQKVRQVQADYMTATREVDFTVPDVQKILDDIKALAAEQVSKIVKMPSISFRHIVMQARDRVLRVDTYYEEMSQVGDVITEDEPEKFYSTIIKKVRFIRGKGSFILHDIPTRDHRGMEVAEPEVLGVEFKNVLPVLTAEHRAMIQNALDGSIIENGNVATRDVDVFIGACSEPVYRIYNRLQGYIEAVQLQELRNSIGWLERLGQRKRITYSQEVLTEFRRQDTIWVLALQLPVNPQVVWDVPRSSIANLIMNIATCLPTGEYIAPNPRISSITLTQRITTTGPFAILTGSTPTAQQLNDVRKIYLALMFPGQIILDLKIDPGERMDPAVRMVAGVVGHLLFTAGGRFTNLTQNMARQLDIALNDYLLYMYNTRVQVNYGPTGEPLDFQIGRNQYDCNVFRADFGSGAGYNGWATIDVEYREPAPYVHAQRYIRYCGIDSRELINPTTYGIGMTYHCYNEMLRMLVAAGKDSEAAYFRSMLPFHMVRFARINQIINEDLHSVFSLPDDMFNALLPDLIAGAHQNADPVVLDVSWISLWFAFNRSFEPTHRNEMLEVAPLIESVYASELSVMKVDMRHLSLMQRRFPDVLIQARPSHFWKAVLNDSPEAVKAVMNLSHSHNFINIRDMMRWVMLPSLQPSLKLVLEEEAWAAANDFEDLMLTDQVYMHRDMLPEPRLDDVERFRQEGFYYTNMLEAPPEIDRVVQYTYEIARLQANMGQFRAALRRIMDDDDWVRFGGVLRTVRVKFVDARPPDDVLQGLPFSYDTNEKGGLAYATIKYATETTIFYLIYNVEFSNTPDSLVLINPTYTMTKVFINKRIVERVRVRQILAVLNRRFVAYKGKMRIMDITQSLKMGTKLAAPTV</sequence>
<accession>P20608</accession>